<evidence type="ECO:0000255" key="1">
    <source>
        <dbReference type="HAMAP-Rule" id="MF_00015"/>
    </source>
</evidence>
<reference key="1">
    <citation type="journal article" date="2002" name="Nature">
        <title>Comparison of the genomes of two Xanthomonas pathogens with differing host specificities.</title>
        <authorList>
            <person name="da Silva A.C.R."/>
            <person name="Ferro J.A."/>
            <person name="Reinach F.C."/>
            <person name="Farah C.S."/>
            <person name="Furlan L.R."/>
            <person name="Quaggio R.B."/>
            <person name="Monteiro-Vitorello C.B."/>
            <person name="Van Sluys M.A."/>
            <person name="Almeida N.F. Jr."/>
            <person name="Alves L.M.C."/>
            <person name="do Amaral A.M."/>
            <person name="Bertolini M.C."/>
            <person name="Camargo L.E.A."/>
            <person name="Camarotte G."/>
            <person name="Cannavan F."/>
            <person name="Cardozo J."/>
            <person name="Chambergo F."/>
            <person name="Ciapina L.P."/>
            <person name="Cicarelli R.M.B."/>
            <person name="Coutinho L.L."/>
            <person name="Cursino-Santos J.R."/>
            <person name="El-Dorry H."/>
            <person name="Faria J.B."/>
            <person name="Ferreira A.J.S."/>
            <person name="Ferreira R.C.C."/>
            <person name="Ferro M.I.T."/>
            <person name="Formighieri E.F."/>
            <person name="Franco M.C."/>
            <person name="Greggio C.C."/>
            <person name="Gruber A."/>
            <person name="Katsuyama A.M."/>
            <person name="Kishi L.T."/>
            <person name="Leite R.P."/>
            <person name="Lemos E.G.M."/>
            <person name="Lemos M.V.F."/>
            <person name="Locali E.C."/>
            <person name="Machado M.A."/>
            <person name="Madeira A.M.B.N."/>
            <person name="Martinez-Rossi N.M."/>
            <person name="Martins E.C."/>
            <person name="Meidanis J."/>
            <person name="Menck C.F.M."/>
            <person name="Miyaki C.Y."/>
            <person name="Moon D.H."/>
            <person name="Moreira L.M."/>
            <person name="Novo M.T.M."/>
            <person name="Okura V.K."/>
            <person name="Oliveira M.C."/>
            <person name="Oliveira V.R."/>
            <person name="Pereira H.A."/>
            <person name="Rossi A."/>
            <person name="Sena J.A.D."/>
            <person name="Silva C."/>
            <person name="de Souza R.F."/>
            <person name="Spinola L.A.F."/>
            <person name="Takita M.A."/>
            <person name="Tamura R.E."/>
            <person name="Teixeira E.C."/>
            <person name="Tezza R.I.D."/>
            <person name="Trindade dos Santos M."/>
            <person name="Truffi D."/>
            <person name="Tsai S.M."/>
            <person name="White F.F."/>
            <person name="Setubal J.C."/>
            <person name="Kitajima J.P."/>
        </authorList>
    </citation>
    <scope>NUCLEOTIDE SEQUENCE [LARGE SCALE GENOMIC DNA]</scope>
    <source>
        <strain>306</strain>
    </source>
</reference>
<feature type="chain" id="PRO_0000170105" description="LexA repressor 1">
    <location>
        <begin position="1"/>
        <end position="201"/>
    </location>
</feature>
<feature type="DNA-binding region" description="H-T-H motif" evidence="1">
    <location>
        <begin position="27"/>
        <end position="47"/>
    </location>
</feature>
<feature type="active site" description="For autocatalytic cleavage activity" evidence="1">
    <location>
        <position position="122"/>
    </location>
</feature>
<feature type="active site" description="For autocatalytic cleavage activity" evidence="1">
    <location>
        <position position="159"/>
    </location>
</feature>
<feature type="site" description="Cleavage; by autolysis" evidence="1">
    <location>
        <begin position="87"/>
        <end position="88"/>
    </location>
</feature>
<comment type="function">
    <text evidence="1">Represses a number of genes involved in the response to DNA damage (SOS response), including recA and lexA. In the presence of single-stranded DNA, RecA interacts with LexA causing an autocatalytic cleavage which disrupts the DNA-binding part of LexA, leading to derepression of the SOS regulon and eventually DNA repair.</text>
</comment>
<comment type="catalytic activity">
    <reaction evidence="1">
        <text>Hydrolysis of Ala-|-Gly bond in repressor LexA.</text>
        <dbReference type="EC" id="3.4.21.88"/>
    </reaction>
</comment>
<comment type="subunit">
    <text evidence="1">Homodimer.</text>
</comment>
<comment type="similarity">
    <text evidence="1">Belongs to the peptidase S24 family.</text>
</comment>
<accession>Q8PN77</accession>
<sequence length="201" mass="21442">MPSLPPQRAAVLAFLQEQAQAGVSPSLAEIAQAFGFASRNAAQKHVQALADAGLIELLPNQKRGIRLPGGAGRDALLALPVLGRVAAGLPIGADIGLERQLWLDRALFSLRPDYLLQVQGDSMIDDGILDGDLVGVHRSNEARDGQIVVARVDGEITIKRLERGAERIRLLPRNRAHAPIVVAADADFAIEGLYCGLIRQG</sequence>
<organism>
    <name type="scientific">Xanthomonas axonopodis pv. citri (strain 306)</name>
    <dbReference type="NCBI Taxonomy" id="190486"/>
    <lineage>
        <taxon>Bacteria</taxon>
        <taxon>Pseudomonadati</taxon>
        <taxon>Pseudomonadota</taxon>
        <taxon>Gammaproteobacteria</taxon>
        <taxon>Lysobacterales</taxon>
        <taxon>Lysobacteraceae</taxon>
        <taxon>Xanthomonas</taxon>
    </lineage>
</organism>
<name>LEXA1_XANAC</name>
<keyword id="KW-0068">Autocatalytic cleavage</keyword>
<keyword id="KW-0227">DNA damage</keyword>
<keyword id="KW-0234">DNA repair</keyword>
<keyword id="KW-0235">DNA replication</keyword>
<keyword id="KW-0238">DNA-binding</keyword>
<keyword id="KW-0378">Hydrolase</keyword>
<keyword id="KW-0678">Repressor</keyword>
<keyword id="KW-0742">SOS response</keyword>
<keyword id="KW-0804">Transcription</keyword>
<keyword id="KW-0805">Transcription regulation</keyword>
<gene>
    <name evidence="1" type="primary">lexA1</name>
    <name type="ordered locus">XAC1196</name>
</gene>
<protein>
    <recommendedName>
        <fullName evidence="1">LexA repressor 1</fullName>
        <ecNumber evidence="1">3.4.21.88</ecNumber>
    </recommendedName>
</protein>
<proteinExistence type="inferred from homology"/>
<dbReference type="EC" id="3.4.21.88" evidence="1"/>
<dbReference type="EMBL" id="AE008923">
    <property type="protein sequence ID" value="AAM36068.1"/>
    <property type="molecule type" value="Genomic_DNA"/>
</dbReference>
<dbReference type="SMR" id="Q8PN77"/>
<dbReference type="MEROPS" id="S24.001"/>
<dbReference type="KEGG" id="xac:XAC1196"/>
<dbReference type="eggNOG" id="COG1974">
    <property type="taxonomic scope" value="Bacteria"/>
</dbReference>
<dbReference type="HOGENOM" id="CLU_066192_45_3_6"/>
<dbReference type="Proteomes" id="UP000000576">
    <property type="component" value="Chromosome"/>
</dbReference>
<dbReference type="CollecTF" id="EXPREG_000013b0"/>
<dbReference type="GO" id="GO:0032993">
    <property type="term" value="C:protein-DNA complex"/>
    <property type="evidence" value="ECO:0000315"/>
    <property type="project" value="CollecTF"/>
</dbReference>
<dbReference type="GO" id="GO:0001217">
    <property type="term" value="F:DNA-binding transcription repressor activity"/>
    <property type="evidence" value="ECO:0000315"/>
    <property type="project" value="CollecTF"/>
</dbReference>
<dbReference type="GO" id="GO:0004252">
    <property type="term" value="F:serine-type endopeptidase activity"/>
    <property type="evidence" value="ECO:0007669"/>
    <property type="project" value="UniProtKB-UniRule"/>
</dbReference>
<dbReference type="GO" id="GO:0000976">
    <property type="term" value="F:transcription cis-regulatory region binding"/>
    <property type="evidence" value="ECO:0000315"/>
    <property type="project" value="CollecTF"/>
</dbReference>
<dbReference type="GO" id="GO:0006281">
    <property type="term" value="P:DNA repair"/>
    <property type="evidence" value="ECO:0007669"/>
    <property type="project" value="UniProtKB-UniRule"/>
</dbReference>
<dbReference type="GO" id="GO:0006260">
    <property type="term" value="P:DNA replication"/>
    <property type="evidence" value="ECO:0007669"/>
    <property type="project" value="UniProtKB-UniRule"/>
</dbReference>
<dbReference type="GO" id="GO:0045892">
    <property type="term" value="P:negative regulation of DNA-templated transcription"/>
    <property type="evidence" value="ECO:0000270"/>
    <property type="project" value="CollecTF"/>
</dbReference>
<dbReference type="GO" id="GO:0006508">
    <property type="term" value="P:proteolysis"/>
    <property type="evidence" value="ECO:0007669"/>
    <property type="project" value="InterPro"/>
</dbReference>
<dbReference type="GO" id="GO:0009432">
    <property type="term" value="P:SOS response"/>
    <property type="evidence" value="ECO:0000270"/>
    <property type="project" value="CollecTF"/>
</dbReference>
<dbReference type="CDD" id="cd06529">
    <property type="entry name" value="S24_LexA-like"/>
    <property type="match status" value="1"/>
</dbReference>
<dbReference type="FunFam" id="2.10.109.10:FF:000001">
    <property type="entry name" value="LexA repressor"/>
    <property type="match status" value="1"/>
</dbReference>
<dbReference type="Gene3D" id="2.10.109.10">
    <property type="entry name" value="Umud Fragment, subunit A"/>
    <property type="match status" value="1"/>
</dbReference>
<dbReference type="Gene3D" id="1.10.10.10">
    <property type="entry name" value="Winged helix-like DNA-binding domain superfamily/Winged helix DNA-binding domain"/>
    <property type="match status" value="1"/>
</dbReference>
<dbReference type="HAMAP" id="MF_00015">
    <property type="entry name" value="LexA"/>
    <property type="match status" value="1"/>
</dbReference>
<dbReference type="InterPro" id="IPR006200">
    <property type="entry name" value="LexA"/>
</dbReference>
<dbReference type="InterPro" id="IPR039418">
    <property type="entry name" value="LexA-like"/>
</dbReference>
<dbReference type="InterPro" id="IPR036286">
    <property type="entry name" value="LexA/Signal_pep-like_sf"/>
</dbReference>
<dbReference type="InterPro" id="IPR006199">
    <property type="entry name" value="LexA_DNA-bd_dom"/>
</dbReference>
<dbReference type="InterPro" id="IPR050077">
    <property type="entry name" value="LexA_repressor"/>
</dbReference>
<dbReference type="InterPro" id="IPR006197">
    <property type="entry name" value="Peptidase_S24_LexA"/>
</dbReference>
<dbReference type="InterPro" id="IPR015927">
    <property type="entry name" value="Peptidase_S24_S26A/B/C"/>
</dbReference>
<dbReference type="InterPro" id="IPR036388">
    <property type="entry name" value="WH-like_DNA-bd_sf"/>
</dbReference>
<dbReference type="InterPro" id="IPR036390">
    <property type="entry name" value="WH_DNA-bd_sf"/>
</dbReference>
<dbReference type="NCBIfam" id="TIGR00498">
    <property type="entry name" value="lexA"/>
    <property type="match status" value="1"/>
</dbReference>
<dbReference type="PANTHER" id="PTHR33516">
    <property type="entry name" value="LEXA REPRESSOR"/>
    <property type="match status" value="1"/>
</dbReference>
<dbReference type="PANTHER" id="PTHR33516:SF2">
    <property type="entry name" value="LEXA REPRESSOR-RELATED"/>
    <property type="match status" value="1"/>
</dbReference>
<dbReference type="Pfam" id="PF01726">
    <property type="entry name" value="LexA_DNA_bind"/>
    <property type="match status" value="1"/>
</dbReference>
<dbReference type="Pfam" id="PF00717">
    <property type="entry name" value="Peptidase_S24"/>
    <property type="match status" value="1"/>
</dbReference>
<dbReference type="PRINTS" id="PR00726">
    <property type="entry name" value="LEXASERPTASE"/>
</dbReference>
<dbReference type="SUPFAM" id="SSF51306">
    <property type="entry name" value="LexA/Signal peptidase"/>
    <property type="match status" value="1"/>
</dbReference>
<dbReference type="SUPFAM" id="SSF46785">
    <property type="entry name" value="Winged helix' DNA-binding domain"/>
    <property type="match status" value="1"/>
</dbReference>